<gene>
    <name type="ordered locus">ABC1519</name>
</gene>
<organism>
    <name type="scientific">Shouchella clausii (strain KSM-K16)</name>
    <name type="common">Alkalihalobacillus clausii</name>
    <dbReference type="NCBI Taxonomy" id="66692"/>
    <lineage>
        <taxon>Bacteria</taxon>
        <taxon>Bacillati</taxon>
        <taxon>Bacillota</taxon>
        <taxon>Bacilli</taxon>
        <taxon>Bacillales</taxon>
        <taxon>Bacillaceae</taxon>
        <taxon>Shouchella</taxon>
    </lineage>
</organism>
<feature type="chain" id="PRO_0000109971" description="UPF0342 protein ABC1519">
    <location>
        <begin position="1"/>
        <end position="118"/>
    </location>
</feature>
<accession>Q5WHV1</accession>
<keyword id="KW-1185">Reference proteome</keyword>
<comment type="similarity">
    <text evidence="1">Belongs to the UPF0342 family.</text>
</comment>
<proteinExistence type="inferred from homology"/>
<name>Y1519_SHOC1</name>
<evidence type="ECO:0000255" key="1">
    <source>
        <dbReference type="HAMAP-Rule" id="MF_01526"/>
    </source>
</evidence>
<sequence length="118" mass="13813">MSNAYDKAHELKEALAETQEFKSLYDLHRQIDADDIAKKMLENFRKLQLDLQQKQMQGVQISEEEAQQAQQQFELVSQHELISKLMDAEQRLSVIITDLNKIITEPLERIYGEPPQEQ</sequence>
<dbReference type="EMBL" id="AP006627">
    <property type="protein sequence ID" value="BAD64054.1"/>
    <property type="molecule type" value="Genomic_DNA"/>
</dbReference>
<dbReference type="RefSeq" id="WP_011246363.1">
    <property type="nucleotide sequence ID" value="NC_006582.1"/>
</dbReference>
<dbReference type="SMR" id="Q5WHV1"/>
<dbReference type="STRING" id="66692.ABC1519"/>
<dbReference type="KEGG" id="bcl:ABC1519"/>
<dbReference type="eggNOG" id="COG3679">
    <property type="taxonomic scope" value="Bacteria"/>
</dbReference>
<dbReference type="HOGENOM" id="CLU_140243_3_0_9"/>
<dbReference type="OrthoDB" id="9811402at2"/>
<dbReference type="Proteomes" id="UP000001168">
    <property type="component" value="Chromosome"/>
</dbReference>
<dbReference type="Gene3D" id="1.20.1500.10">
    <property type="entry name" value="YheA/YmcA-like"/>
    <property type="match status" value="1"/>
</dbReference>
<dbReference type="HAMAP" id="MF_01526">
    <property type="entry name" value="UPF0342"/>
    <property type="match status" value="1"/>
</dbReference>
<dbReference type="InterPro" id="IPR010368">
    <property type="entry name" value="Com_YlbF"/>
</dbReference>
<dbReference type="InterPro" id="IPR023378">
    <property type="entry name" value="YheA/YmcA-like_dom_sf"/>
</dbReference>
<dbReference type="Pfam" id="PF06133">
    <property type="entry name" value="Com_YlbF"/>
    <property type="match status" value="1"/>
</dbReference>
<dbReference type="SUPFAM" id="SSF158622">
    <property type="entry name" value="YheA/YmcA-like"/>
    <property type="match status" value="1"/>
</dbReference>
<reference key="1">
    <citation type="submission" date="2003-10" db="EMBL/GenBank/DDBJ databases">
        <title>The complete genome sequence of the alkaliphilic Bacillus clausii KSM-K16.</title>
        <authorList>
            <person name="Takaki Y."/>
            <person name="Kageyama Y."/>
            <person name="Shimamura S."/>
            <person name="Suzuki H."/>
            <person name="Nishi S."/>
            <person name="Hatada Y."/>
            <person name="Kawai S."/>
            <person name="Ito S."/>
            <person name="Horikoshi K."/>
        </authorList>
    </citation>
    <scope>NUCLEOTIDE SEQUENCE [LARGE SCALE GENOMIC DNA]</scope>
    <source>
        <strain>KSM-K16</strain>
    </source>
</reference>
<protein>
    <recommendedName>
        <fullName evidence="1">UPF0342 protein ABC1519</fullName>
    </recommendedName>
</protein>